<organism>
    <name type="scientific">Drosophila melanogaster</name>
    <name type="common">Fruit fly</name>
    <dbReference type="NCBI Taxonomy" id="7227"/>
    <lineage>
        <taxon>Eukaryota</taxon>
        <taxon>Metazoa</taxon>
        <taxon>Ecdysozoa</taxon>
        <taxon>Arthropoda</taxon>
        <taxon>Hexapoda</taxon>
        <taxon>Insecta</taxon>
        <taxon>Pterygota</taxon>
        <taxon>Neoptera</taxon>
        <taxon>Endopterygota</taxon>
        <taxon>Diptera</taxon>
        <taxon>Brachycera</taxon>
        <taxon>Muscomorpha</taxon>
        <taxon>Ephydroidea</taxon>
        <taxon>Drosophilidae</taxon>
        <taxon>Drosophila</taxon>
        <taxon>Sophophora</taxon>
    </lineage>
</organism>
<reference key="1">
    <citation type="journal article" date="2000" name="Science">
        <title>The genome sequence of Drosophila melanogaster.</title>
        <authorList>
            <person name="Adams M.D."/>
            <person name="Celniker S.E."/>
            <person name="Holt R.A."/>
            <person name="Evans C.A."/>
            <person name="Gocayne J.D."/>
            <person name="Amanatides P.G."/>
            <person name="Scherer S.E."/>
            <person name="Li P.W."/>
            <person name="Hoskins R.A."/>
            <person name="Galle R.F."/>
            <person name="George R.A."/>
            <person name="Lewis S.E."/>
            <person name="Richards S."/>
            <person name="Ashburner M."/>
            <person name="Henderson S.N."/>
            <person name="Sutton G.G."/>
            <person name="Wortman J.R."/>
            <person name="Yandell M.D."/>
            <person name="Zhang Q."/>
            <person name="Chen L.X."/>
            <person name="Brandon R.C."/>
            <person name="Rogers Y.-H.C."/>
            <person name="Blazej R.G."/>
            <person name="Champe M."/>
            <person name="Pfeiffer B.D."/>
            <person name="Wan K.H."/>
            <person name="Doyle C."/>
            <person name="Baxter E.G."/>
            <person name="Helt G."/>
            <person name="Nelson C.R."/>
            <person name="Miklos G.L.G."/>
            <person name="Abril J.F."/>
            <person name="Agbayani A."/>
            <person name="An H.-J."/>
            <person name="Andrews-Pfannkoch C."/>
            <person name="Baldwin D."/>
            <person name="Ballew R.M."/>
            <person name="Basu A."/>
            <person name="Baxendale J."/>
            <person name="Bayraktaroglu L."/>
            <person name="Beasley E.M."/>
            <person name="Beeson K.Y."/>
            <person name="Benos P.V."/>
            <person name="Berman B.P."/>
            <person name="Bhandari D."/>
            <person name="Bolshakov S."/>
            <person name="Borkova D."/>
            <person name="Botchan M.R."/>
            <person name="Bouck J."/>
            <person name="Brokstein P."/>
            <person name="Brottier P."/>
            <person name="Burtis K.C."/>
            <person name="Busam D.A."/>
            <person name="Butler H."/>
            <person name="Cadieu E."/>
            <person name="Center A."/>
            <person name="Chandra I."/>
            <person name="Cherry J.M."/>
            <person name="Cawley S."/>
            <person name="Dahlke C."/>
            <person name="Davenport L.B."/>
            <person name="Davies P."/>
            <person name="de Pablos B."/>
            <person name="Delcher A."/>
            <person name="Deng Z."/>
            <person name="Mays A.D."/>
            <person name="Dew I."/>
            <person name="Dietz S.M."/>
            <person name="Dodson K."/>
            <person name="Doup L.E."/>
            <person name="Downes M."/>
            <person name="Dugan-Rocha S."/>
            <person name="Dunkov B.C."/>
            <person name="Dunn P."/>
            <person name="Durbin K.J."/>
            <person name="Evangelista C.C."/>
            <person name="Ferraz C."/>
            <person name="Ferriera S."/>
            <person name="Fleischmann W."/>
            <person name="Fosler C."/>
            <person name="Gabrielian A.E."/>
            <person name="Garg N.S."/>
            <person name="Gelbart W.M."/>
            <person name="Glasser K."/>
            <person name="Glodek A."/>
            <person name="Gong F."/>
            <person name="Gorrell J.H."/>
            <person name="Gu Z."/>
            <person name="Guan P."/>
            <person name="Harris M."/>
            <person name="Harris N.L."/>
            <person name="Harvey D.A."/>
            <person name="Heiman T.J."/>
            <person name="Hernandez J.R."/>
            <person name="Houck J."/>
            <person name="Hostin D."/>
            <person name="Houston K.A."/>
            <person name="Howland T.J."/>
            <person name="Wei M.-H."/>
            <person name="Ibegwam C."/>
            <person name="Jalali M."/>
            <person name="Kalush F."/>
            <person name="Karpen G.H."/>
            <person name="Ke Z."/>
            <person name="Kennison J.A."/>
            <person name="Ketchum K.A."/>
            <person name="Kimmel B.E."/>
            <person name="Kodira C.D."/>
            <person name="Kraft C.L."/>
            <person name="Kravitz S."/>
            <person name="Kulp D."/>
            <person name="Lai Z."/>
            <person name="Lasko P."/>
            <person name="Lei Y."/>
            <person name="Levitsky A.A."/>
            <person name="Li J.H."/>
            <person name="Li Z."/>
            <person name="Liang Y."/>
            <person name="Lin X."/>
            <person name="Liu X."/>
            <person name="Mattei B."/>
            <person name="McIntosh T.C."/>
            <person name="McLeod M.P."/>
            <person name="McPherson D."/>
            <person name="Merkulov G."/>
            <person name="Milshina N.V."/>
            <person name="Mobarry C."/>
            <person name="Morris J."/>
            <person name="Moshrefi A."/>
            <person name="Mount S.M."/>
            <person name="Moy M."/>
            <person name="Murphy B."/>
            <person name="Murphy L."/>
            <person name="Muzny D.M."/>
            <person name="Nelson D.L."/>
            <person name="Nelson D.R."/>
            <person name="Nelson K.A."/>
            <person name="Nixon K."/>
            <person name="Nusskern D.R."/>
            <person name="Pacleb J.M."/>
            <person name="Palazzolo M."/>
            <person name="Pittman G.S."/>
            <person name="Pan S."/>
            <person name="Pollard J."/>
            <person name="Puri V."/>
            <person name="Reese M.G."/>
            <person name="Reinert K."/>
            <person name="Remington K."/>
            <person name="Saunders R.D.C."/>
            <person name="Scheeler F."/>
            <person name="Shen H."/>
            <person name="Shue B.C."/>
            <person name="Siden-Kiamos I."/>
            <person name="Simpson M."/>
            <person name="Skupski M.P."/>
            <person name="Smith T.J."/>
            <person name="Spier E."/>
            <person name="Spradling A.C."/>
            <person name="Stapleton M."/>
            <person name="Strong R."/>
            <person name="Sun E."/>
            <person name="Svirskas R."/>
            <person name="Tector C."/>
            <person name="Turner R."/>
            <person name="Venter E."/>
            <person name="Wang A.H."/>
            <person name="Wang X."/>
            <person name="Wang Z.-Y."/>
            <person name="Wassarman D.A."/>
            <person name="Weinstock G.M."/>
            <person name="Weissenbach J."/>
            <person name="Williams S.M."/>
            <person name="Woodage T."/>
            <person name="Worley K.C."/>
            <person name="Wu D."/>
            <person name="Yang S."/>
            <person name="Yao Q.A."/>
            <person name="Ye J."/>
            <person name="Yeh R.-F."/>
            <person name="Zaveri J.S."/>
            <person name="Zhan M."/>
            <person name="Zhang G."/>
            <person name="Zhao Q."/>
            <person name="Zheng L."/>
            <person name="Zheng X.H."/>
            <person name="Zhong F.N."/>
            <person name="Zhong W."/>
            <person name="Zhou X."/>
            <person name="Zhu S.C."/>
            <person name="Zhu X."/>
            <person name="Smith H.O."/>
            <person name="Gibbs R.A."/>
            <person name="Myers E.W."/>
            <person name="Rubin G.M."/>
            <person name="Venter J.C."/>
        </authorList>
    </citation>
    <scope>NUCLEOTIDE SEQUENCE [LARGE SCALE GENOMIC DNA]</scope>
    <source>
        <strain>Berkeley</strain>
    </source>
</reference>
<reference key="2">
    <citation type="journal article" date="2002" name="Genome Biol.">
        <title>Annotation of the Drosophila melanogaster euchromatic genome: a systematic review.</title>
        <authorList>
            <person name="Misra S."/>
            <person name="Crosby M.A."/>
            <person name="Mungall C.J."/>
            <person name="Matthews B.B."/>
            <person name="Campbell K.S."/>
            <person name="Hradecky P."/>
            <person name="Huang Y."/>
            <person name="Kaminker J.S."/>
            <person name="Millburn G.H."/>
            <person name="Prochnik S.E."/>
            <person name="Smith C.D."/>
            <person name="Tupy J.L."/>
            <person name="Whitfield E.J."/>
            <person name="Bayraktaroglu L."/>
            <person name="Berman B.P."/>
            <person name="Bettencourt B.R."/>
            <person name="Celniker S.E."/>
            <person name="de Grey A.D.N.J."/>
            <person name="Drysdale R.A."/>
            <person name="Harris N.L."/>
            <person name="Richter J."/>
            <person name="Russo S."/>
            <person name="Schroeder A.J."/>
            <person name="Shu S.Q."/>
            <person name="Stapleton M."/>
            <person name="Yamada C."/>
            <person name="Ashburner M."/>
            <person name="Gelbart W.M."/>
            <person name="Rubin G.M."/>
            <person name="Lewis S.E."/>
        </authorList>
    </citation>
    <scope>GENOME REANNOTATION</scope>
    <source>
        <strain>Berkeley</strain>
    </source>
</reference>
<reference key="3">
    <citation type="journal article" date="2002" name="Genome Biol.">
        <title>A Drosophila full-length cDNA resource.</title>
        <authorList>
            <person name="Stapleton M."/>
            <person name="Carlson J.W."/>
            <person name="Brokstein P."/>
            <person name="Yu C."/>
            <person name="Champe M."/>
            <person name="George R.A."/>
            <person name="Guarin H."/>
            <person name="Kronmiller B."/>
            <person name="Pacleb J.M."/>
            <person name="Park S."/>
            <person name="Wan K.H."/>
            <person name="Rubin G.M."/>
            <person name="Celniker S.E."/>
        </authorList>
    </citation>
    <scope>NUCLEOTIDE SEQUENCE [LARGE SCALE MRNA]</scope>
    <source>
        <strain>Berkeley</strain>
        <tissue>Embryo</tissue>
    </source>
</reference>
<reference key="4">
    <citation type="journal article" date="2007" name="Mol. Biosyst.">
        <title>An integrated chemical, mass spectrometric and computational strategy for (quantitative) phosphoproteomics: application to Drosophila melanogaster Kc167 cells.</title>
        <authorList>
            <person name="Bodenmiller B."/>
            <person name="Mueller L.N."/>
            <person name="Pedrioli P.G.A."/>
            <person name="Pflieger D."/>
            <person name="Juenger M.A."/>
            <person name="Eng J.K."/>
            <person name="Aebersold R."/>
            <person name="Tao W.A."/>
        </authorList>
    </citation>
    <scope>PHOSPHORYLATION [LARGE SCALE ANALYSIS] AT THR-75; THR-78 AND THR-81</scope>
    <scope>IDENTIFICATION BY MASS SPECTROMETRY</scope>
</reference>
<gene>
    <name type="primary">Cyp309a1</name>
    <name type="ORF">CG9964</name>
</gene>
<keyword id="KW-0256">Endoplasmic reticulum</keyword>
<keyword id="KW-0349">Heme</keyword>
<keyword id="KW-0408">Iron</keyword>
<keyword id="KW-0472">Membrane</keyword>
<keyword id="KW-0479">Metal-binding</keyword>
<keyword id="KW-0492">Microsome</keyword>
<keyword id="KW-0503">Monooxygenase</keyword>
<keyword id="KW-0560">Oxidoreductase</keyword>
<keyword id="KW-0597">Phosphoprotein</keyword>
<keyword id="KW-1185">Reference proteome</keyword>
<evidence type="ECO:0000250" key="1"/>
<evidence type="ECO:0000269" key="2">
    <source>
    </source>
</evidence>
<evidence type="ECO:0000305" key="3"/>
<sequence>MFTLVGLCLTIVHVAFAVVYFYLTWYHKYWDKRGVVTAEPLTILGSYPGILINKSRSLILDVQDVYNKYKDKYRTVGTFITRQPQLLVLDPALAHEILVDKFSHFRDTITSSFVGHNPDDKYVAGSPFFSAGDKWKRLRSENVGGLTPSRLKMAYSIWEQSGRKLVEYIERARREQGDIIETRDLAYRFTANAMADFIWGIDAGSLSGKVGEIGDFQKTSTDWSAHAFSSMIRFNKTLVAIFVRKLFSMRFFTKATDEFFLRLTQDAVNLRQGGSGEGRTDYLSHLIQLQQRGNSIHDSVGHALTVHLDGFETSGAVLYHMLYSLSEHHEEQEKLRSEILEALASEGQISYDQINNLPYLDQCFNESLRLTTPIGFFMRICTKPTQINLGDDKTLDLEPGVTVMVPAYQYHHDNDIYPEASEFRPDRFENGAASVLTKRGCFLPFGDGPRICLGMRVGQLSVKTAIVHILSNYQVEQMKKVPLGADSGMGIFLNGDVELKYTKLQK</sequence>
<proteinExistence type="evidence at protein level"/>
<comment type="function">
    <text evidence="1">May be involved in the metabolism of insect hormones and in the breakdown of synthetic insecticides.</text>
</comment>
<comment type="cofactor">
    <cofactor evidence="1">
        <name>heme</name>
        <dbReference type="ChEBI" id="CHEBI:30413"/>
    </cofactor>
</comment>
<comment type="subcellular location">
    <subcellularLocation>
        <location evidence="3">Endoplasmic reticulum membrane</location>
        <topology evidence="3">Peripheral membrane protein</topology>
    </subcellularLocation>
    <subcellularLocation>
        <location evidence="3">Microsome membrane</location>
        <topology evidence="3">Peripheral membrane protein</topology>
    </subcellularLocation>
</comment>
<comment type="similarity">
    <text evidence="3">Belongs to the cytochrome P450 family.</text>
</comment>
<accession>Q9VQD2</accession>
<accession>M9PCC5</accession>
<protein>
    <recommendedName>
        <fullName>Probable cytochrome P450 309a1</fullName>
        <ecNumber>1.14.-.-</ecNumber>
    </recommendedName>
    <alternativeName>
        <fullName>CYPCCCIXA1</fullName>
    </alternativeName>
</protein>
<dbReference type="EC" id="1.14.-.-"/>
<dbReference type="EMBL" id="AE014134">
    <property type="protein sequence ID" value="AAF51243.4"/>
    <property type="molecule type" value="Genomic_DNA"/>
</dbReference>
<dbReference type="EMBL" id="AE014134">
    <property type="protein sequence ID" value="AGB92480.1"/>
    <property type="molecule type" value="Genomic_DNA"/>
</dbReference>
<dbReference type="EMBL" id="AY071367">
    <property type="protein sequence ID" value="AAL48989.1"/>
    <property type="molecule type" value="mRNA"/>
</dbReference>
<dbReference type="RefSeq" id="NP_001259943.1">
    <property type="nucleotide sequence ID" value="NM_001273014.1"/>
</dbReference>
<dbReference type="RefSeq" id="NP_608688.3">
    <property type="nucleotide sequence ID" value="NM_134844.4"/>
</dbReference>
<dbReference type="SMR" id="Q9VQD2"/>
<dbReference type="BioGRID" id="59665">
    <property type="interactions" value="2"/>
</dbReference>
<dbReference type="DIP" id="DIP-24004N"/>
<dbReference type="STRING" id="7227.FBpp0307161"/>
<dbReference type="iPTMnet" id="Q9VQD2"/>
<dbReference type="PaxDb" id="7227-FBpp0077429"/>
<dbReference type="DNASU" id="33438"/>
<dbReference type="EnsemblMetazoa" id="FBtr0335166">
    <property type="protein sequence ID" value="FBpp0307160"/>
    <property type="gene ID" value="FBgn0031432"/>
</dbReference>
<dbReference type="EnsemblMetazoa" id="FBtr0335167">
    <property type="protein sequence ID" value="FBpp0307161"/>
    <property type="gene ID" value="FBgn0031432"/>
</dbReference>
<dbReference type="GeneID" id="33438"/>
<dbReference type="KEGG" id="dme:Dmel_CG9964"/>
<dbReference type="UCSC" id="CG9964-RA">
    <property type="organism name" value="d. melanogaster"/>
</dbReference>
<dbReference type="AGR" id="FB:FBgn0031432"/>
<dbReference type="CTD" id="33438"/>
<dbReference type="FlyBase" id="FBgn0031432">
    <property type="gene designation" value="Cyp309a1"/>
</dbReference>
<dbReference type="VEuPathDB" id="VectorBase:FBgn0031432"/>
<dbReference type="eggNOG" id="KOG0158">
    <property type="taxonomic scope" value="Eukaryota"/>
</dbReference>
<dbReference type="GeneTree" id="ENSGT00940000167276"/>
<dbReference type="HOGENOM" id="CLU_001570_5_2_1"/>
<dbReference type="InParanoid" id="Q9VQD2"/>
<dbReference type="OMA" id="RFTANTM"/>
<dbReference type="OrthoDB" id="2789670at2759"/>
<dbReference type="PhylomeDB" id="Q9VQD2"/>
<dbReference type="BioGRID-ORCS" id="33438">
    <property type="hits" value="0 hits in 1 CRISPR screen"/>
</dbReference>
<dbReference type="GenomeRNAi" id="33438"/>
<dbReference type="PRO" id="PR:Q9VQD2"/>
<dbReference type="Proteomes" id="UP000000803">
    <property type="component" value="Chromosome 2L"/>
</dbReference>
<dbReference type="Bgee" id="FBgn0031432">
    <property type="expression patterns" value="Expressed in enterocyte of anterior adult midgut epithelium in digestive tract and 41 other cell types or tissues"/>
</dbReference>
<dbReference type="GO" id="GO:0005789">
    <property type="term" value="C:endoplasmic reticulum membrane"/>
    <property type="evidence" value="ECO:0007669"/>
    <property type="project" value="UniProtKB-SubCell"/>
</dbReference>
<dbReference type="GO" id="GO:0020037">
    <property type="term" value="F:heme binding"/>
    <property type="evidence" value="ECO:0007669"/>
    <property type="project" value="InterPro"/>
</dbReference>
<dbReference type="GO" id="GO:0005506">
    <property type="term" value="F:iron ion binding"/>
    <property type="evidence" value="ECO:0007669"/>
    <property type="project" value="InterPro"/>
</dbReference>
<dbReference type="GO" id="GO:0004497">
    <property type="term" value="F:monooxygenase activity"/>
    <property type="evidence" value="ECO:0007669"/>
    <property type="project" value="UniProtKB-KW"/>
</dbReference>
<dbReference type="GO" id="GO:0016705">
    <property type="term" value="F:oxidoreductase activity, acting on paired donors, with incorporation or reduction of molecular oxygen"/>
    <property type="evidence" value="ECO:0007669"/>
    <property type="project" value="InterPro"/>
</dbReference>
<dbReference type="CDD" id="cd11056">
    <property type="entry name" value="CYP6-like"/>
    <property type="match status" value="1"/>
</dbReference>
<dbReference type="Gene3D" id="1.10.630.10">
    <property type="entry name" value="Cytochrome P450"/>
    <property type="match status" value="1"/>
</dbReference>
<dbReference type="InterPro" id="IPR001128">
    <property type="entry name" value="Cyt_P450"/>
</dbReference>
<dbReference type="InterPro" id="IPR017972">
    <property type="entry name" value="Cyt_P450_CS"/>
</dbReference>
<dbReference type="InterPro" id="IPR002401">
    <property type="entry name" value="Cyt_P450_E_grp-I"/>
</dbReference>
<dbReference type="InterPro" id="IPR036396">
    <property type="entry name" value="Cyt_P450_sf"/>
</dbReference>
<dbReference type="InterPro" id="IPR050476">
    <property type="entry name" value="Insect_CytP450_Detox"/>
</dbReference>
<dbReference type="PANTHER" id="PTHR24292">
    <property type="entry name" value="CYTOCHROME P450"/>
    <property type="match status" value="1"/>
</dbReference>
<dbReference type="PANTHER" id="PTHR24292:SF84">
    <property type="entry name" value="CYTOCHROME P450 28A5-RELATED"/>
    <property type="match status" value="1"/>
</dbReference>
<dbReference type="Pfam" id="PF00067">
    <property type="entry name" value="p450"/>
    <property type="match status" value="1"/>
</dbReference>
<dbReference type="PRINTS" id="PR00463">
    <property type="entry name" value="EP450I"/>
</dbReference>
<dbReference type="PRINTS" id="PR00385">
    <property type="entry name" value="P450"/>
</dbReference>
<dbReference type="SUPFAM" id="SSF48264">
    <property type="entry name" value="Cytochrome P450"/>
    <property type="match status" value="1"/>
</dbReference>
<dbReference type="PROSITE" id="PS00086">
    <property type="entry name" value="CYTOCHROME_P450"/>
    <property type="match status" value="1"/>
</dbReference>
<name>CP391_DROME</name>
<feature type="chain" id="PRO_0000052318" description="Probable cytochrome P450 309a1">
    <location>
        <begin position="1"/>
        <end position="506"/>
    </location>
</feature>
<feature type="binding site" description="axial binding residue" evidence="1">
    <location>
        <position position="452"/>
    </location>
    <ligand>
        <name>heme</name>
        <dbReference type="ChEBI" id="CHEBI:30413"/>
    </ligand>
    <ligandPart>
        <name>Fe</name>
        <dbReference type="ChEBI" id="CHEBI:18248"/>
    </ligandPart>
</feature>
<feature type="modified residue" description="Phosphothreonine" evidence="2">
    <location>
        <position position="75"/>
    </location>
</feature>
<feature type="modified residue" description="Phosphothreonine" evidence="2">
    <location>
        <position position="78"/>
    </location>
</feature>
<feature type="modified residue" description="Phosphothreonine" evidence="2">
    <location>
        <position position="81"/>
    </location>
</feature>